<name>DEFCG_MAGGI</name>
<dbReference type="EMBL" id="FJ669403">
    <property type="protein sequence ID" value="ACQ72990.1"/>
    <property type="molecule type" value="Genomic_DNA"/>
</dbReference>
<dbReference type="EMBL" id="FJ669404">
    <property type="protein sequence ID" value="ACQ72991.1"/>
    <property type="molecule type" value="Genomic_DNA"/>
</dbReference>
<dbReference type="EMBL" id="FJ669406">
    <property type="protein sequence ID" value="ACQ72993.1"/>
    <property type="molecule type" value="Genomic_DNA"/>
</dbReference>
<dbReference type="EMBL" id="FJ669407">
    <property type="protein sequence ID" value="ACQ72994.1"/>
    <property type="molecule type" value="Genomic_DNA"/>
</dbReference>
<dbReference type="EMBL" id="FJ669409">
    <property type="protein sequence ID" value="ACQ72996.1"/>
    <property type="molecule type" value="Genomic_DNA"/>
</dbReference>
<dbReference type="EMBL" id="FJ669410">
    <property type="protein sequence ID" value="ACQ72997.1"/>
    <property type="molecule type" value="Genomic_DNA"/>
</dbReference>
<dbReference type="EMBL" id="FJ669325">
    <property type="protein sequence ID" value="ACQ76260.1"/>
    <property type="molecule type" value="mRNA"/>
</dbReference>
<dbReference type="EMBL" id="FJ669326">
    <property type="protein sequence ID" value="ACQ76261.1"/>
    <property type="molecule type" value="mRNA"/>
</dbReference>
<dbReference type="EMBL" id="FJ669328">
    <property type="protein sequence ID" value="ACQ76263.1"/>
    <property type="molecule type" value="mRNA"/>
</dbReference>
<dbReference type="EMBL" id="FJ669332">
    <property type="protein sequence ID" value="ACQ76267.1"/>
    <property type="molecule type" value="mRNA"/>
</dbReference>
<dbReference type="EMBL" id="FJ669335">
    <property type="protein sequence ID" value="ACQ76270.1"/>
    <property type="molecule type" value="mRNA"/>
</dbReference>
<dbReference type="EMBL" id="FJ669337">
    <property type="protein sequence ID" value="ACQ76272.1"/>
    <property type="molecule type" value="mRNA"/>
</dbReference>
<dbReference type="EMBL" id="FJ669338">
    <property type="protein sequence ID" value="ACQ76273.1"/>
    <property type="molecule type" value="mRNA"/>
</dbReference>
<dbReference type="EMBL" id="FJ669339">
    <property type="protein sequence ID" value="ACQ76274.1"/>
    <property type="molecule type" value="mRNA"/>
</dbReference>
<dbReference type="EMBL" id="FJ669340">
    <property type="protein sequence ID" value="ACQ76275.1"/>
    <property type="molecule type" value="mRNA"/>
</dbReference>
<dbReference type="EMBL" id="JF766718">
    <property type="protein sequence ID" value="AEO44999.1"/>
    <property type="molecule type" value="mRNA"/>
</dbReference>
<dbReference type="EMBL" id="JF766719">
    <property type="protein sequence ID" value="AEO45000.1"/>
    <property type="molecule type" value="mRNA"/>
</dbReference>
<dbReference type="EMBL" id="JF766720">
    <property type="protein sequence ID" value="AEO45001.1"/>
    <property type="molecule type" value="mRNA"/>
</dbReference>
<dbReference type="EMBL" id="JF766721">
    <property type="protein sequence ID" value="AEO45002.1"/>
    <property type="molecule type" value="mRNA"/>
</dbReference>
<dbReference type="EMBL" id="JF766722">
    <property type="protein sequence ID" value="AEO45003.1"/>
    <property type="molecule type" value="mRNA"/>
</dbReference>
<dbReference type="EMBL" id="JF766732">
    <property type="protein sequence ID" value="AEO45013.1"/>
    <property type="molecule type" value="mRNA"/>
</dbReference>
<dbReference type="EMBL" id="JF766733">
    <property type="protein sequence ID" value="AEO45014.1"/>
    <property type="molecule type" value="mRNA"/>
</dbReference>
<dbReference type="EMBL" id="JF766734">
    <property type="protein sequence ID" value="AEO45015.1"/>
    <property type="molecule type" value="mRNA"/>
</dbReference>
<dbReference type="EMBL" id="JF766735">
    <property type="protein sequence ID" value="AEO45016.1"/>
    <property type="molecule type" value="mRNA"/>
</dbReference>
<dbReference type="EMBL" id="JF766736">
    <property type="protein sequence ID" value="AEO45017.1"/>
    <property type="molecule type" value="mRNA"/>
</dbReference>
<dbReference type="EMBL" id="JF766739">
    <property type="protein sequence ID" value="AEO45020.1"/>
    <property type="molecule type" value="mRNA"/>
</dbReference>
<dbReference type="EMBL" id="JF766741">
    <property type="protein sequence ID" value="AEO45022.1"/>
    <property type="molecule type" value="mRNA"/>
</dbReference>
<dbReference type="EMBL" id="JF766742">
    <property type="protein sequence ID" value="AEO45023.1"/>
    <property type="molecule type" value="mRNA"/>
</dbReference>
<dbReference type="EMBL" id="AM050547">
    <property type="protein sequence ID" value="CAJ19280.1"/>
    <property type="molecule type" value="Genomic_DNA"/>
</dbReference>
<dbReference type="EMBL" id="AJ565499">
    <property type="status" value="NOT_ANNOTATED_CDS"/>
    <property type="molecule type" value="mRNA"/>
</dbReference>
<dbReference type="PDB" id="2B68">
    <property type="method" value="NMR"/>
    <property type="chains" value="A=23-65"/>
</dbReference>
<dbReference type="PDBsum" id="2B68"/>
<dbReference type="SMR" id="Q4GWV4"/>
<dbReference type="EnsemblMetazoa" id="G30973.5">
    <property type="protein sequence ID" value="G30973.5:cds"/>
    <property type="gene ID" value="G30973"/>
</dbReference>
<dbReference type="InParanoid" id="Q4GWV4"/>
<dbReference type="EvolutionaryTrace" id="Q4GWV4"/>
<dbReference type="Proteomes" id="UP000005408">
    <property type="component" value="Unassembled WGS sequence"/>
</dbReference>
<dbReference type="GO" id="GO:0005576">
    <property type="term" value="C:extracellular region"/>
    <property type="evidence" value="ECO:0007669"/>
    <property type="project" value="UniProtKB-SubCell"/>
</dbReference>
<dbReference type="GO" id="GO:0016020">
    <property type="term" value="C:membrane"/>
    <property type="evidence" value="ECO:0007669"/>
    <property type="project" value="UniProtKB-KW"/>
</dbReference>
<dbReference type="GO" id="GO:0044218">
    <property type="term" value="C:other organism cell membrane"/>
    <property type="evidence" value="ECO:0007669"/>
    <property type="project" value="UniProtKB-KW"/>
</dbReference>
<dbReference type="GO" id="GO:0008289">
    <property type="term" value="F:lipid binding"/>
    <property type="evidence" value="ECO:0007669"/>
    <property type="project" value="UniProtKB-KW"/>
</dbReference>
<dbReference type="GO" id="GO:0042742">
    <property type="term" value="P:defense response to bacterium"/>
    <property type="evidence" value="ECO:0007669"/>
    <property type="project" value="UniProtKB-KW"/>
</dbReference>
<dbReference type="GO" id="GO:0045087">
    <property type="term" value="P:innate immune response"/>
    <property type="evidence" value="ECO:0007669"/>
    <property type="project" value="UniProtKB-KW"/>
</dbReference>
<dbReference type="Gene3D" id="3.30.30.10">
    <property type="entry name" value="Knottin, scorpion toxin-like"/>
    <property type="match status" value="1"/>
</dbReference>
<dbReference type="InterPro" id="IPR001542">
    <property type="entry name" value="Defensin_invertebrate/fungal"/>
</dbReference>
<dbReference type="InterPro" id="IPR036574">
    <property type="entry name" value="Scorpion_toxin-like_sf"/>
</dbReference>
<dbReference type="SUPFAM" id="SSF57095">
    <property type="entry name" value="Scorpion toxin-like"/>
    <property type="match status" value="1"/>
</dbReference>
<dbReference type="PROSITE" id="PS51378">
    <property type="entry name" value="INVERT_DEFENSINS"/>
    <property type="match status" value="1"/>
</dbReference>
<evidence type="ECO:0000250" key="1">
    <source>
        <dbReference type="UniProtKB" id="Q53I06"/>
    </source>
</evidence>
<evidence type="ECO:0000255" key="2"/>
<evidence type="ECO:0000269" key="3">
    <source>
    </source>
</evidence>
<evidence type="ECO:0000269" key="4">
    <source>
    </source>
</evidence>
<evidence type="ECO:0000303" key="5">
    <source>
    </source>
</evidence>
<evidence type="ECO:0000303" key="6">
    <source>
    </source>
</evidence>
<evidence type="ECO:0000305" key="7"/>
<evidence type="ECO:0007744" key="8">
    <source>
        <dbReference type="PDB" id="2B68"/>
    </source>
</evidence>
<evidence type="ECO:0007829" key="9">
    <source>
        <dbReference type="PDB" id="2B68"/>
    </source>
</evidence>
<comment type="function">
    <text evidence="3 4">Antibacterial peptide mostly active against Gram-positive bacteria (M.lysodeikticus, S.aureus, and the marine bacteria, B.stationis, and M.maritypicum) (PubMed:16246846). It acts by selectively inhibiting peptidoglycan biosynthesis through complex formation with the cell wall precursor lipid II (1:1 molar ratio) thus inhibiting cell wall synthesis (PubMed:20605792). It does not disrupt cell membranes (PubMed:20605792). Is noticeably more potent than Cg-Defh1 (PubMed:20605792). It shows no or limited activities against Gram-negative bacteria and filamentous fungi (PubMed:16246846).</text>
</comment>
<comment type="subcellular location">
    <subcellularLocation>
        <location evidence="7">Secreted</location>
    </subcellularLocation>
    <subcellularLocation>
        <location evidence="1">Target cell membrane</location>
    </subcellularLocation>
</comment>
<comment type="tissue specificity">
    <text evidence="3">Expressed in the mantle. Low or no expression in most of the organs analyzed, including hemocytes, heart, digestive gland, and gills.</text>
</comment>
<comment type="induction">
    <text evidence="3">Constitutively expressed.</text>
</comment>
<comment type="domain">
    <text evidence="7">Has the structural arrangement of an alpha-helix connected to a beta-sheet by disulfide bonds (CSalpha/beta).</text>
</comment>
<comment type="mass spectrometry"/>
<comment type="miscellaneous">
    <text evidence="3">The Cys-26-Pro-27 bond is in cis conformation.</text>
</comment>
<comment type="similarity">
    <text evidence="7">Belongs to the invertebrate defensin family.</text>
</comment>
<comment type="online information" name="The antimicrobial peptide database">
    <link uri="https://wangapd3.com/database/query_output.php?ID=00558"/>
</comment>
<protein>
    <recommendedName>
        <fullName evidence="6">Defensin Cg-Defm</fullName>
    </recommendedName>
    <alternativeName>
        <fullName evidence="5">Cg-Def</fullName>
    </alternativeName>
    <alternativeName>
        <fullName evidence="6">Mantle defensin</fullName>
    </alternativeName>
</protein>
<organism>
    <name type="scientific">Magallana gigas</name>
    <name type="common">Pacific oyster</name>
    <name type="synonym">Crassostrea gigas</name>
    <dbReference type="NCBI Taxonomy" id="29159"/>
    <lineage>
        <taxon>Eukaryota</taxon>
        <taxon>Metazoa</taxon>
        <taxon>Spiralia</taxon>
        <taxon>Lophotrochozoa</taxon>
        <taxon>Mollusca</taxon>
        <taxon>Bivalvia</taxon>
        <taxon>Autobranchia</taxon>
        <taxon>Pteriomorphia</taxon>
        <taxon>Ostreida</taxon>
        <taxon>Ostreoidea</taxon>
        <taxon>Ostreidae</taxon>
        <taxon>Magallana</taxon>
    </lineage>
</organism>
<accession>Q4GWV4</accession>
<reference evidence="8" key="1">
    <citation type="journal article" date="2006" name="J. Biol. Chem.">
        <title>Characterization of a defensin from the oyster Crassostrea gigas. Recombinant production, folding, solution structure, antimicrobial activities, and gene expression.</title>
        <authorList>
            <person name="Gueguen Y."/>
            <person name="Herpin A."/>
            <person name="Aumelas A."/>
            <person name="Garnier J."/>
            <person name="Fievet J."/>
            <person name="Escoubas J.M."/>
            <person name="Bulet P."/>
            <person name="Gonzalez M."/>
            <person name="Lelong C."/>
            <person name="Favrel P."/>
            <person name="Bachere E."/>
        </authorList>
    </citation>
    <scope>NUCLEOTIDE SEQUENCE [GENOMIC DNA / MRNA]</scope>
    <scope>STRUCTURE BY NMR OF 23-65</scope>
    <scope>DISULFIDE BONDS</scope>
    <scope>TISSUE SPECIFICITY</scope>
    <scope>MASS SPECTROMETRY</scope>
    <source>
        <tissue>Mantle</tissue>
    </source>
</reference>
<reference key="2">
    <citation type="journal article" date="2010" name="BMC Evol. Biol.">
        <title>Molecular diversity of antimicrobial effectors in the oyster Crassostrea gigas.</title>
        <authorList>
            <person name="Schmitt P."/>
            <person name="Gueguen Y."/>
            <person name="Desmarais E."/>
            <person name="Bachere E."/>
            <person name="de Lorgeril J."/>
        </authorList>
    </citation>
    <scope>NUCLEOTIDE SEQUENCE [GENOMIC DNA / MRNA]</scope>
</reference>
<reference key="3">
    <citation type="journal article" date="2010" name="J. Biol. Chem.">
        <title>Insight into invertebrate defensin mechanism of action: oyster defensins inhibit peptidoglycan biosynthesis by binding to lipid II.</title>
        <authorList>
            <person name="Schmitt P."/>
            <person name="Wilmes M."/>
            <person name="Pugniere M."/>
            <person name="Aumelas A."/>
            <person name="Bachere E."/>
            <person name="Sahl H.G."/>
            <person name="Schneider T."/>
            <person name="Destoumieux-Garzon D."/>
        </authorList>
    </citation>
    <scope>FUNCTION</scope>
</reference>
<keyword id="KW-0002">3D-structure</keyword>
<keyword id="KW-0044">Antibiotic</keyword>
<keyword id="KW-0929">Antimicrobial</keyword>
<keyword id="KW-0211">Defensin</keyword>
<keyword id="KW-1015">Disulfide bond</keyword>
<keyword id="KW-0391">Immunity</keyword>
<keyword id="KW-0399">Innate immunity</keyword>
<keyword id="KW-0446">Lipid-binding</keyword>
<keyword id="KW-0472">Membrane</keyword>
<keyword id="KW-1185">Reference proteome</keyword>
<keyword id="KW-0964">Secreted</keyword>
<keyword id="KW-0732">Signal</keyword>
<keyword id="KW-1052">Target cell membrane</keyword>
<keyword id="KW-1053">Target membrane</keyword>
<proteinExistence type="evidence at protein level"/>
<sequence>MKVFVLLTLAVLLMVSADMAFAGFGCPGNQLKCNNHCKSISCRAGYCDAATLWLRCTCTDCNGKK</sequence>
<feature type="signal peptide" evidence="2">
    <location>
        <begin position="1"/>
        <end position="22"/>
    </location>
</feature>
<feature type="chain" id="PRO_5007703123" description="Defensin Cg-Defm" evidence="2">
    <location>
        <begin position="23"/>
        <end position="65"/>
    </location>
</feature>
<feature type="region of interest" description="Binds to membrane interface" evidence="1">
    <location>
        <begin position="27"/>
        <end position="30"/>
    </location>
</feature>
<feature type="region of interest" description="Binds to membrane interface" evidence="1">
    <location>
        <begin position="48"/>
        <end position="54"/>
    </location>
</feature>
<feature type="binding site" evidence="1">
    <location>
        <position position="24"/>
    </location>
    <ligand>
        <name>beta-D-GlcNAc-(1-&gt;4)-Mur2Ac(oyl-L-Ala-gamma-D-Glu-L-Lys-D-Ala-D-Ala)-di-trans,octa-cis-undecaprenyl diphosphate</name>
        <dbReference type="ChEBI" id="CHEBI:60033"/>
    </ligand>
</feature>
<feature type="binding site" evidence="1">
    <location>
        <position position="25"/>
    </location>
    <ligand>
        <name>beta-D-GlcNAc-(1-&gt;4)-Mur2Ac(oyl-L-Ala-gamma-D-Glu-L-Lys-D-Ala-D-Ala)-di-trans,octa-cis-undecaprenyl diphosphate</name>
        <dbReference type="ChEBI" id="CHEBI:60033"/>
    </ligand>
</feature>
<feature type="binding site" evidence="1">
    <location>
        <position position="26"/>
    </location>
    <ligand>
        <name>beta-D-GlcNAc-(1-&gt;4)-Mur2Ac(oyl-L-Ala-gamma-D-Glu-L-Lys-D-Ala-D-Ala)-di-trans,octa-cis-undecaprenyl diphosphate</name>
        <dbReference type="ChEBI" id="CHEBI:60033"/>
    </ligand>
</feature>
<feature type="binding site" evidence="1">
    <location>
        <position position="36"/>
    </location>
    <ligand>
        <name>beta-D-GlcNAc-(1-&gt;4)-Mur2Ac(oyl-L-Ala-gamma-D-Glu-L-Lys-D-Ala-D-Ala)-di-trans,octa-cis-undecaprenyl diphosphate</name>
        <dbReference type="ChEBI" id="CHEBI:60033"/>
    </ligand>
</feature>
<feature type="binding site" evidence="1">
    <location>
        <position position="56"/>
    </location>
    <ligand>
        <name>beta-D-GlcNAc-(1-&gt;4)-Mur2Ac(oyl-L-Ala-gamma-D-Glu-L-Lys-D-Ala-D-Ala)-di-trans,octa-cis-undecaprenyl diphosphate</name>
        <dbReference type="ChEBI" id="CHEBI:60033"/>
    </ligand>
</feature>
<feature type="disulfide bond" evidence="3 8">
    <location>
        <begin position="26"/>
        <end position="47"/>
    </location>
</feature>
<feature type="disulfide bond" evidence="3 8">
    <location>
        <begin position="33"/>
        <end position="56"/>
    </location>
</feature>
<feature type="disulfide bond" evidence="3 8">
    <location>
        <begin position="37"/>
        <end position="58"/>
    </location>
</feature>
<feature type="disulfide bond" evidence="3 8">
    <location>
        <begin position="42"/>
        <end position="61"/>
    </location>
</feature>
<feature type="helix" evidence="9">
    <location>
        <begin position="31"/>
        <end position="40"/>
    </location>
</feature>
<feature type="strand" evidence="9">
    <location>
        <begin position="43"/>
        <end position="46"/>
    </location>
</feature>
<feature type="turn" evidence="9">
    <location>
        <begin position="49"/>
        <end position="52"/>
    </location>
</feature>
<feature type="strand" evidence="9">
    <location>
        <begin position="57"/>
        <end position="59"/>
    </location>
</feature>